<feature type="chain" id="PRO_1000015535" description="33 kDa chaperonin">
    <location>
        <begin position="1"/>
        <end position="296"/>
    </location>
</feature>
<feature type="disulfide bond" description="Redox-active" evidence="1">
    <location>
        <begin position="238"/>
        <end position="240"/>
    </location>
</feature>
<feature type="disulfide bond" description="Redox-active" evidence="1">
    <location>
        <begin position="271"/>
        <end position="274"/>
    </location>
</feature>
<accession>A7GI10</accession>
<dbReference type="EMBL" id="CP000728">
    <property type="protein sequence ID" value="ABS42324.1"/>
    <property type="molecule type" value="Genomic_DNA"/>
</dbReference>
<dbReference type="RefSeq" id="WP_003405920.1">
    <property type="nucleotide sequence ID" value="NC_009699.1"/>
</dbReference>
<dbReference type="SMR" id="A7GI10"/>
<dbReference type="KEGG" id="cbf:CLI_3208"/>
<dbReference type="HOGENOM" id="CLU_054493_1_0_9"/>
<dbReference type="Proteomes" id="UP000002410">
    <property type="component" value="Chromosome"/>
</dbReference>
<dbReference type="GO" id="GO:0005737">
    <property type="term" value="C:cytoplasm"/>
    <property type="evidence" value="ECO:0007669"/>
    <property type="project" value="UniProtKB-SubCell"/>
</dbReference>
<dbReference type="GO" id="GO:0044183">
    <property type="term" value="F:protein folding chaperone"/>
    <property type="evidence" value="ECO:0007669"/>
    <property type="project" value="TreeGrafter"/>
</dbReference>
<dbReference type="GO" id="GO:0051082">
    <property type="term" value="F:unfolded protein binding"/>
    <property type="evidence" value="ECO:0007669"/>
    <property type="project" value="UniProtKB-UniRule"/>
</dbReference>
<dbReference type="GO" id="GO:0042026">
    <property type="term" value="P:protein refolding"/>
    <property type="evidence" value="ECO:0007669"/>
    <property type="project" value="TreeGrafter"/>
</dbReference>
<dbReference type="CDD" id="cd00498">
    <property type="entry name" value="Hsp33"/>
    <property type="match status" value="1"/>
</dbReference>
<dbReference type="Gene3D" id="3.55.30.10">
    <property type="entry name" value="Hsp33 domain"/>
    <property type="match status" value="1"/>
</dbReference>
<dbReference type="Gene3D" id="3.90.1280.10">
    <property type="entry name" value="HSP33 redox switch-like"/>
    <property type="match status" value="1"/>
</dbReference>
<dbReference type="HAMAP" id="MF_00117">
    <property type="entry name" value="HslO"/>
    <property type="match status" value="1"/>
</dbReference>
<dbReference type="InterPro" id="IPR000397">
    <property type="entry name" value="Heat_shock_Hsp33"/>
</dbReference>
<dbReference type="InterPro" id="IPR016154">
    <property type="entry name" value="Heat_shock_Hsp33_C"/>
</dbReference>
<dbReference type="InterPro" id="IPR016153">
    <property type="entry name" value="Heat_shock_Hsp33_N"/>
</dbReference>
<dbReference type="NCBIfam" id="NF001033">
    <property type="entry name" value="PRK00114.1"/>
    <property type="match status" value="1"/>
</dbReference>
<dbReference type="PANTHER" id="PTHR30111">
    <property type="entry name" value="33 KDA CHAPERONIN"/>
    <property type="match status" value="1"/>
</dbReference>
<dbReference type="PANTHER" id="PTHR30111:SF1">
    <property type="entry name" value="33 KDA CHAPERONIN"/>
    <property type="match status" value="1"/>
</dbReference>
<dbReference type="Pfam" id="PF01430">
    <property type="entry name" value="HSP33"/>
    <property type="match status" value="1"/>
</dbReference>
<dbReference type="PIRSF" id="PIRSF005261">
    <property type="entry name" value="Heat_shock_Hsp33"/>
    <property type="match status" value="1"/>
</dbReference>
<dbReference type="SUPFAM" id="SSF64397">
    <property type="entry name" value="Hsp33 domain"/>
    <property type="match status" value="1"/>
</dbReference>
<dbReference type="SUPFAM" id="SSF118352">
    <property type="entry name" value="HSP33 redox switch-like"/>
    <property type="match status" value="1"/>
</dbReference>
<name>HSLO_CLOBL</name>
<proteinExistence type="inferred from homology"/>
<protein>
    <recommendedName>
        <fullName evidence="1">33 kDa chaperonin</fullName>
    </recommendedName>
    <alternativeName>
        <fullName evidence="1">Heat shock protein 33 homolog</fullName>
        <shortName evidence="1">HSP33</shortName>
    </alternativeName>
</protein>
<evidence type="ECO:0000255" key="1">
    <source>
        <dbReference type="HAMAP-Rule" id="MF_00117"/>
    </source>
</evidence>
<sequence>MKDKLVKAIAKDGQVRIIGAITTELVNEGVKLHNCAPTAAAALGRMLTAGALMGTTLKSEKDTLTLQIHGGGIAKGVVVTSYADGHVKGYIGNPTADIEPNSKGKLDVSGIIGKNGNLLVIRDMGLKEPYIGQVPIYTGEIGEDLAYYYTVSEQTPSAVGLGVLVDKDLSIKSAGGFIIQMMPGADEMLADLISYRLEEIPSITEMISKGMTIEEILEYIFEDMDLKILESIAPEYRCDCSREKVERALASIGQKDLKEIYDEGKEEELKCHFCNKAYVFSHDEVGDILENYYSEK</sequence>
<gene>
    <name evidence="1" type="primary">hslO</name>
    <name type="ordered locus">CLI_3208</name>
</gene>
<organism>
    <name type="scientific">Clostridium botulinum (strain Langeland / NCTC 10281 / Type F)</name>
    <dbReference type="NCBI Taxonomy" id="441772"/>
    <lineage>
        <taxon>Bacteria</taxon>
        <taxon>Bacillati</taxon>
        <taxon>Bacillota</taxon>
        <taxon>Clostridia</taxon>
        <taxon>Eubacteriales</taxon>
        <taxon>Clostridiaceae</taxon>
        <taxon>Clostridium</taxon>
    </lineage>
</organism>
<reference key="1">
    <citation type="submission" date="2007-06" db="EMBL/GenBank/DDBJ databases">
        <authorList>
            <person name="Brinkac L.M."/>
            <person name="Daugherty S."/>
            <person name="Dodson R.J."/>
            <person name="Madupu R."/>
            <person name="Brown J.L."/>
            <person name="Bruce D."/>
            <person name="Detter C."/>
            <person name="Munk C."/>
            <person name="Smith L.A."/>
            <person name="Smith T.J."/>
            <person name="White O."/>
            <person name="Brettin T.S."/>
        </authorList>
    </citation>
    <scope>NUCLEOTIDE SEQUENCE [LARGE SCALE GENOMIC DNA]</scope>
    <source>
        <strain>Langeland / NCTC 10281 / Type F</strain>
    </source>
</reference>
<keyword id="KW-0143">Chaperone</keyword>
<keyword id="KW-0963">Cytoplasm</keyword>
<keyword id="KW-1015">Disulfide bond</keyword>
<keyword id="KW-0676">Redox-active center</keyword>
<keyword id="KW-0862">Zinc</keyword>
<comment type="function">
    <text evidence="1">Redox regulated molecular chaperone. Protects both thermally unfolding and oxidatively damaged proteins from irreversible aggregation. Plays an important role in the bacterial defense system toward oxidative stress.</text>
</comment>
<comment type="subcellular location">
    <subcellularLocation>
        <location evidence="1">Cytoplasm</location>
    </subcellularLocation>
</comment>
<comment type="PTM">
    <text evidence="1">Under oxidizing conditions two disulfide bonds are formed involving the reactive cysteines. Under reducing conditions zinc is bound to the reactive cysteines and the protein is inactive.</text>
</comment>
<comment type="similarity">
    <text evidence="1">Belongs to the HSP33 family.</text>
</comment>